<proteinExistence type="inferred from homology"/>
<accession>Q9UYU9</accession>
<accession>G8ZHL5</accession>
<evidence type="ECO:0000255" key="1">
    <source>
        <dbReference type="HAMAP-Rule" id="MF_00448"/>
    </source>
</evidence>
<evidence type="ECO:0000305" key="2"/>
<name>RL10E_PYRAB</name>
<sequence>MALRPAKIDRYVDKPAYTRREYIRGAPGPKITIFDMGNPAGDFEFEVALHVSQPVQIRQNALEAARQQVNRYLQKNVGRSNYHFKIRVYPFQVLRENPMATGRKADRYGNGMRRPFGKPIGLAARLKKDQKVLSIRVNRQHLKFAIEGARRAAMKFPVKCYYRIYDKEGNDVTTKILSQGL</sequence>
<organism>
    <name type="scientific">Pyrococcus abyssi (strain GE5 / Orsay)</name>
    <dbReference type="NCBI Taxonomy" id="272844"/>
    <lineage>
        <taxon>Archaea</taxon>
        <taxon>Methanobacteriati</taxon>
        <taxon>Methanobacteriota</taxon>
        <taxon>Thermococci</taxon>
        <taxon>Thermococcales</taxon>
        <taxon>Thermococcaceae</taxon>
        <taxon>Pyrococcus</taxon>
    </lineage>
</organism>
<keyword id="KW-0687">Ribonucleoprotein</keyword>
<keyword id="KW-0689">Ribosomal protein</keyword>
<comment type="similarity">
    <text evidence="1">Belongs to the universal ribosomal protein uL16 family.</text>
</comment>
<protein>
    <recommendedName>
        <fullName evidence="1">Large ribosomal subunit protein uL16</fullName>
    </recommendedName>
    <alternativeName>
        <fullName evidence="2">50S ribosomal protein L10e</fullName>
    </alternativeName>
</protein>
<feature type="chain" id="PRO_0000147142" description="Large ribosomal subunit protein uL16">
    <location>
        <begin position="1"/>
        <end position="181"/>
    </location>
</feature>
<gene>
    <name evidence="1" type="primary">rpl10e</name>
    <name type="ordered locus">PYRAB14080</name>
    <name type="ORF">PAB1444</name>
</gene>
<reference key="1">
    <citation type="journal article" date="2003" name="Mol. Microbiol.">
        <title>An integrated analysis of the genome of the hyperthermophilic archaeon Pyrococcus abyssi.</title>
        <authorList>
            <person name="Cohen G.N."/>
            <person name="Barbe V."/>
            <person name="Flament D."/>
            <person name="Galperin M."/>
            <person name="Heilig R."/>
            <person name="Lecompte O."/>
            <person name="Poch O."/>
            <person name="Prieur D."/>
            <person name="Querellou J."/>
            <person name="Ripp R."/>
            <person name="Thierry J.-C."/>
            <person name="Van der Oost J."/>
            <person name="Weissenbach J."/>
            <person name="Zivanovic Y."/>
            <person name="Forterre P."/>
        </authorList>
    </citation>
    <scope>NUCLEOTIDE SEQUENCE [LARGE SCALE GENOMIC DNA]</scope>
    <source>
        <strain>GE5 / Orsay</strain>
    </source>
</reference>
<reference key="2">
    <citation type="journal article" date="2012" name="Curr. Microbiol.">
        <title>Re-annotation of two hyperthermophilic archaea Pyrococcus abyssi GE5 and Pyrococcus furiosus DSM 3638.</title>
        <authorList>
            <person name="Gao J."/>
            <person name="Wang J."/>
        </authorList>
    </citation>
    <scope>GENOME REANNOTATION</scope>
    <source>
        <strain>GE5 / Orsay</strain>
    </source>
</reference>
<dbReference type="EMBL" id="AJ248287">
    <property type="protein sequence ID" value="CAB50313.1"/>
    <property type="molecule type" value="Genomic_DNA"/>
</dbReference>
<dbReference type="EMBL" id="HE613800">
    <property type="protein sequence ID" value="CCE70852.1"/>
    <property type="molecule type" value="Genomic_DNA"/>
</dbReference>
<dbReference type="PIR" id="D75052">
    <property type="entry name" value="D75052"/>
</dbReference>
<dbReference type="RefSeq" id="WP_010868523.1">
    <property type="nucleotide sequence ID" value="NC_000868.1"/>
</dbReference>
<dbReference type="SMR" id="Q9UYU9"/>
<dbReference type="STRING" id="272844.PAB1444"/>
<dbReference type="KEGG" id="pab:PAB1444"/>
<dbReference type="PATRIC" id="fig|272844.11.peg.1497"/>
<dbReference type="eggNOG" id="arCOG04113">
    <property type="taxonomic scope" value="Archaea"/>
</dbReference>
<dbReference type="HOGENOM" id="CLU_084051_0_2_2"/>
<dbReference type="OrthoDB" id="30538at2157"/>
<dbReference type="PhylomeDB" id="Q9UYU9"/>
<dbReference type="Proteomes" id="UP000000810">
    <property type="component" value="Chromosome"/>
</dbReference>
<dbReference type="Proteomes" id="UP000009139">
    <property type="component" value="Chromosome"/>
</dbReference>
<dbReference type="GO" id="GO:1990904">
    <property type="term" value="C:ribonucleoprotein complex"/>
    <property type="evidence" value="ECO:0007669"/>
    <property type="project" value="UniProtKB-KW"/>
</dbReference>
<dbReference type="GO" id="GO:0005840">
    <property type="term" value="C:ribosome"/>
    <property type="evidence" value="ECO:0007669"/>
    <property type="project" value="UniProtKB-KW"/>
</dbReference>
<dbReference type="GO" id="GO:0003735">
    <property type="term" value="F:structural constituent of ribosome"/>
    <property type="evidence" value="ECO:0007669"/>
    <property type="project" value="InterPro"/>
</dbReference>
<dbReference type="GO" id="GO:0006412">
    <property type="term" value="P:translation"/>
    <property type="evidence" value="ECO:0007669"/>
    <property type="project" value="UniProtKB-UniRule"/>
</dbReference>
<dbReference type="CDD" id="cd01433">
    <property type="entry name" value="Ribosomal_L16_L10e"/>
    <property type="match status" value="1"/>
</dbReference>
<dbReference type="Gene3D" id="3.90.1170.10">
    <property type="entry name" value="Ribosomal protein L10e/L16"/>
    <property type="match status" value="1"/>
</dbReference>
<dbReference type="HAMAP" id="MF_00448">
    <property type="entry name" value="Ribosomal_uL16_arch"/>
    <property type="match status" value="1"/>
</dbReference>
<dbReference type="InterPro" id="IPR047873">
    <property type="entry name" value="Ribosomal_uL16"/>
</dbReference>
<dbReference type="InterPro" id="IPR022981">
    <property type="entry name" value="Ribosomal_uL16_arc"/>
</dbReference>
<dbReference type="InterPro" id="IPR018255">
    <property type="entry name" value="Ribosomal_uL16_CS_euk_arc"/>
</dbReference>
<dbReference type="InterPro" id="IPR016180">
    <property type="entry name" value="Ribosomal_uL16_dom"/>
</dbReference>
<dbReference type="InterPro" id="IPR001197">
    <property type="entry name" value="Ribosomal_uL16_euk_arch"/>
</dbReference>
<dbReference type="InterPro" id="IPR036920">
    <property type="entry name" value="Ribosomal_uL16_sf"/>
</dbReference>
<dbReference type="NCBIfam" id="NF003237">
    <property type="entry name" value="PRK04199.1-2"/>
    <property type="match status" value="1"/>
</dbReference>
<dbReference type="NCBIfam" id="NF003239">
    <property type="entry name" value="PRK04199.1-4"/>
    <property type="match status" value="1"/>
</dbReference>
<dbReference type="PANTHER" id="PTHR11726">
    <property type="entry name" value="60S RIBOSOMAL PROTEIN L10"/>
    <property type="match status" value="1"/>
</dbReference>
<dbReference type="Pfam" id="PF00252">
    <property type="entry name" value="Ribosomal_L16"/>
    <property type="match status" value="1"/>
</dbReference>
<dbReference type="PIRSF" id="PIRSF005590">
    <property type="entry name" value="Ribosomal_L10"/>
    <property type="match status" value="1"/>
</dbReference>
<dbReference type="SUPFAM" id="SSF54686">
    <property type="entry name" value="Ribosomal protein L16p/L10e"/>
    <property type="match status" value="1"/>
</dbReference>
<dbReference type="PROSITE" id="PS01257">
    <property type="entry name" value="RIBOSOMAL_L10E"/>
    <property type="match status" value="1"/>
</dbReference>